<name>MTCU_CALSI</name>
<dbReference type="EMBL" id="AF200420">
    <property type="protein sequence ID" value="AAF08966.1"/>
    <property type="molecule type" value="mRNA"/>
</dbReference>
<dbReference type="GO" id="GO:0046872">
    <property type="term" value="F:metal ion binding"/>
    <property type="evidence" value="ECO:0007669"/>
    <property type="project" value="UniProtKB-KW"/>
</dbReference>
<organism>
    <name type="scientific">Callinectes sapidus</name>
    <name type="common">Blue crab</name>
    <dbReference type="NCBI Taxonomy" id="6763"/>
    <lineage>
        <taxon>Eukaryota</taxon>
        <taxon>Metazoa</taxon>
        <taxon>Ecdysozoa</taxon>
        <taxon>Arthropoda</taxon>
        <taxon>Crustacea</taxon>
        <taxon>Multicrustacea</taxon>
        <taxon>Malacostraca</taxon>
        <taxon>Eumalacostraca</taxon>
        <taxon>Eucarida</taxon>
        <taxon>Decapoda</taxon>
        <taxon>Pleocyemata</taxon>
        <taxon>Brachyura</taxon>
        <taxon>Eubrachyura</taxon>
        <taxon>Portunoidea</taxon>
        <taxon>Portunidae</taxon>
        <taxon>Portuninae</taxon>
        <taxon>Callinectes</taxon>
    </lineage>
</organism>
<feature type="chain" id="PRO_0000197337" description="Copper-specific metallothionein-2">
    <location>
        <begin position="1"/>
        <end position="64"/>
    </location>
</feature>
<feature type="binding site" evidence="1">
    <location>
        <position position="3"/>
    </location>
    <ligand>
        <name>Cu(+)</name>
        <dbReference type="ChEBI" id="CHEBI:49552"/>
        <label>1</label>
    </ligand>
</feature>
<feature type="binding site" evidence="1">
    <location>
        <position position="5"/>
    </location>
    <ligand>
        <name>Cu(+)</name>
        <dbReference type="ChEBI" id="CHEBI:49552"/>
        <label>1</label>
    </ligand>
</feature>
<feature type="binding site" evidence="1">
    <location>
        <position position="5"/>
    </location>
    <ligand>
        <name>Cu(+)</name>
        <dbReference type="ChEBI" id="CHEBI:49552"/>
        <label>2</label>
    </ligand>
</feature>
<feature type="binding site" evidence="1">
    <location>
        <position position="9"/>
    </location>
    <ligand>
        <name>Cu(+)</name>
        <dbReference type="ChEBI" id="CHEBI:49552"/>
        <label>2</label>
    </ligand>
</feature>
<feature type="binding site" evidence="1">
    <location>
        <position position="11"/>
    </location>
    <ligand>
        <name>Cu(+)</name>
        <dbReference type="ChEBI" id="CHEBI:49552"/>
        <label>3</label>
    </ligand>
</feature>
<feature type="binding site" evidence="1">
    <location>
        <position position="16"/>
    </location>
    <ligand>
        <name>Cu(+)</name>
        <dbReference type="ChEBI" id="CHEBI:49552"/>
        <label>3</label>
    </ligand>
</feature>
<feature type="binding site" evidence="1">
    <location>
        <position position="18"/>
    </location>
    <ligand>
        <name>Cu(+)</name>
        <dbReference type="ChEBI" id="CHEBI:49552"/>
        <label>1</label>
    </ligand>
</feature>
<feature type="binding site" evidence="1">
    <location>
        <position position="18"/>
    </location>
    <ligand>
        <name>Cu(+)</name>
        <dbReference type="ChEBI" id="CHEBI:49552"/>
        <label>3</label>
    </ligand>
</feature>
<feature type="binding site" evidence="1">
    <location>
        <position position="22"/>
    </location>
    <ligand>
        <name>Cu(+)</name>
        <dbReference type="ChEBI" id="CHEBI:49552"/>
        <label>1</label>
    </ligand>
</feature>
<feature type="binding site" evidence="1">
    <location>
        <position position="24"/>
    </location>
    <ligand>
        <name>Cu(+)</name>
        <dbReference type="ChEBI" id="CHEBI:49552"/>
        <label>2</label>
    </ligand>
</feature>
<feature type="binding site" evidence="1">
    <location>
        <position position="27"/>
    </location>
    <ligand>
        <name>Cu(+)</name>
        <dbReference type="ChEBI" id="CHEBI:49552"/>
        <label>2</label>
    </ligand>
</feature>
<feature type="binding site" evidence="1">
    <location>
        <position position="27"/>
    </location>
    <ligand>
        <name>Cu(+)</name>
        <dbReference type="ChEBI" id="CHEBI:49552"/>
        <label>3</label>
    </ligand>
</feature>
<feature type="binding site" evidence="1">
    <location>
        <position position="33"/>
    </location>
    <ligand>
        <name>Cu(+)</name>
        <dbReference type="ChEBI" id="CHEBI:49552"/>
        <label>5</label>
    </ligand>
</feature>
<feature type="binding site" evidence="1">
    <location>
        <position position="40"/>
    </location>
    <ligand>
        <name>Cu(+)</name>
        <dbReference type="ChEBI" id="CHEBI:49552"/>
        <label>5</label>
    </ligand>
</feature>
<feature type="binding site" evidence="1">
    <location>
        <position position="40"/>
    </location>
    <ligand>
        <name>Cu(+)</name>
        <dbReference type="ChEBI" id="CHEBI:49552"/>
        <label>6</label>
    </ligand>
</feature>
<feature type="binding site" evidence="1">
    <location>
        <position position="44"/>
    </location>
    <ligand>
        <name>Cu(+)</name>
        <dbReference type="ChEBI" id="CHEBI:49552"/>
        <label>4</label>
    </ligand>
</feature>
<feature type="binding site" evidence="1">
    <location>
        <position position="44"/>
    </location>
    <ligand>
        <name>Cu(+)</name>
        <dbReference type="ChEBI" id="CHEBI:49552"/>
        <label>5</label>
    </ligand>
</feature>
<feature type="binding site" evidence="1">
    <location>
        <position position="50"/>
    </location>
    <ligand>
        <name>Cu(+)</name>
        <dbReference type="ChEBI" id="CHEBI:49552"/>
        <label>4</label>
    </ligand>
</feature>
<feature type="binding site" evidence="1">
    <location>
        <position position="52"/>
    </location>
    <ligand>
        <name>Cu(+)</name>
        <dbReference type="ChEBI" id="CHEBI:49552"/>
        <label>6</label>
    </ligand>
</feature>
<feature type="binding site" evidence="1">
    <location>
        <position position="56"/>
    </location>
    <ligand>
        <name>Cu(+)</name>
        <dbReference type="ChEBI" id="CHEBI:49552"/>
        <label>6</label>
    </ligand>
</feature>
<feature type="binding site" evidence="1">
    <location>
        <position position="58"/>
    </location>
    <ligand>
        <name>Cu(+)</name>
        <dbReference type="ChEBI" id="CHEBI:49552"/>
        <label>4</label>
    </ligand>
</feature>
<feature type="binding site" evidence="1">
    <location>
        <position position="58"/>
    </location>
    <ligand>
        <name>Cu(+)</name>
        <dbReference type="ChEBI" id="CHEBI:49552"/>
        <label>6</label>
    </ligand>
</feature>
<evidence type="ECO:0000250" key="1">
    <source>
        <dbReference type="UniProtKB" id="P55947"/>
    </source>
</evidence>
<evidence type="ECO:0000305" key="2"/>
<protein>
    <recommendedName>
        <fullName>Copper-specific metallothionein-2</fullName>
    </recommendedName>
    <alternativeName>
        <fullName>CuMT-II</fullName>
    </alternativeName>
</protein>
<comment type="function">
    <text>The metallothioneins are involved in the cellular sequestration of toxic metal ions and regulation of essential trace elements. This isoform binds exclusively copper.</text>
</comment>
<comment type="domain">
    <text>14 cysteine residues are arranged in C-X-C groups. These are thought to be the metal-binding sites in other metallothioneins.</text>
</comment>
<comment type="similarity">
    <text evidence="2">Belongs to the metallothionein superfamily. Type 2 family.</text>
</comment>
<sequence>MPCGCGTSCKCGSGKCCCGSTCNCTTCPSKQSCSCNDGACGSACQCKTSCCCGADCKCSPCPMK</sequence>
<keyword id="KW-0186">Copper</keyword>
<keyword id="KW-0479">Metal-binding</keyword>
<keyword id="KW-0480">Metal-thiolate cluster</keyword>
<reference key="1">
    <citation type="journal article" date="2000" name="Comp. Biochem. Physiol.">
        <title>Cloning and sequencing of cDNAs encoding for a novel copper-specific metallothionein and two cadmium-inducible metallothioneins from the blue crab Callinectes sapidus.</title>
        <authorList>
            <person name="Syring R.A."/>
            <person name="Hoexum-Brouwer T.H."/>
            <person name="Brouwer M."/>
        </authorList>
    </citation>
    <scope>NUCLEOTIDE SEQUENCE [MRNA]</scope>
</reference>
<proteinExistence type="inferred from homology"/>
<accession>Q9U620</accession>